<comment type="function">
    <text evidence="2 3">Component of the signal recognition particle (SRP) complex, a ribonucleoprotein complex that mediates the cotranslational targeting of secretory and membrane proteins to the endoplasmic reticulum (ER). As part of the SRP complex, associates with the SRP receptor (SR) component SRPRA to target secretory proteins to the endoplasmic reticulum membrane. Binds to the signal sequence of presecretory proteins when they emerge from the ribosomes. Displays basal GTPase activity, and stimulates reciprocal GTPase activation of the SR subunit SRPRA. Forms a guanosine 5'-triphosphate (GTP)-dependent complex with the SR subunit SRPRA. SR compaction and GTPase mediated rearrangement of SR drive SRP-mediated cotranslational protein translocation into the ER (By similarity). Requires the presence of SRP9/SRP14 and/or SRP19 to stably interact with RNA (By similarity).</text>
</comment>
<comment type="catalytic activity">
    <reaction evidence="3">
        <text>GTP + H2O = GDP + phosphate + H(+)</text>
        <dbReference type="Rhea" id="RHEA:19669"/>
        <dbReference type="ChEBI" id="CHEBI:15377"/>
        <dbReference type="ChEBI" id="CHEBI:15378"/>
        <dbReference type="ChEBI" id="CHEBI:37565"/>
        <dbReference type="ChEBI" id="CHEBI:43474"/>
        <dbReference type="ChEBI" id="CHEBI:58189"/>
        <dbReference type="EC" id="3.6.5.4"/>
    </reaction>
    <physiologicalReaction direction="left-to-right" evidence="3">
        <dbReference type="Rhea" id="RHEA:19670"/>
    </physiologicalReaction>
</comment>
<comment type="subunit">
    <text evidence="3">Component of a signal recognition particle (SRP) complex that consists of a 7SL RNA molecule of 300 nucleotides and six protein subunits: SRP72, SRP68, SRP54, SRP19, SRP14 and SRP9.</text>
</comment>
<comment type="subcellular location">
    <subcellularLocation>
        <location evidence="3">Cytoplasm</location>
    </subcellularLocation>
    <subcellularLocation>
        <location evidence="3">Endoplasmic reticulum</location>
    </subcellularLocation>
</comment>
<comment type="domain">
    <text evidence="3">The NG domain, also named G domain, is a special guanosine triphosphatase (GTPase) domain, which binds GTP and forms a guanosine 5'-triphosphate (GTP)-dependent complex with a homologous NG domain in the SRP receptor subunit SRPRA. The two NG domains undergo cooperative rearrangements upon their assembly, which culminate in the reciprocal activation of the GTPase activity of one another. SRP receptor compaction upon binding with cargo-loaded SRP and GTPase rearrangement drive SRP-mediated cotranslational protein translocation into the ER.</text>
</comment>
<comment type="domain">
    <text evidence="3">The M domain binds the 7SL RNA in presence of SRP19 and binds the signal sequence of presecretory proteins.</text>
</comment>
<comment type="similarity">
    <text evidence="4">Belongs to the GTP-binding SRP family. SRP54 subfamily.</text>
</comment>
<comment type="sequence caution" evidence="4">
    <conflict type="erroneous gene model prediction">
        <sequence resource="EMBL-CDS" id="AAA66199"/>
    </conflict>
</comment>
<comment type="sequence caution" evidence="4">
    <conflict type="miscellaneous discrepancy">
        <sequence resource="EMBL-CDS" id="AAA66199"/>
    </conflict>
    <text>Sequencing errors.</text>
</comment>
<keyword id="KW-0963">Cytoplasm</keyword>
<keyword id="KW-0256">Endoplasmic reticulum</keyword>
<keyword id="KW-0342">GTP-binding</keyword>
<keyword id="KW-0378">Hydrolase</keyword>
<keyword id="KW-0547">Nucleotide-binding</keyword>
<keyword id="KW-1185">Reference proteome</keyword>
<keyword id="KW-0687">Ribonucleoprotein</keyword>
<keyword id="KW-0694">RNA-binding</keyword>
<keyword id="KW-0733">Signal recognition particle</keyword>
<name>SR542_ARATH</name>
<feature type="chain" id="PRO_0000101205" description="Signal recognition particle subunit SRP54 2">
    <location>
        <begin position="1"/>
        <end position="497"/>
    </location>
</feature>
<feature type="region of interest" description="G-domain">
    <location>
        <begin position="1"/>
        <end position="297"/>
    </location>
</feature>
<feature type="region of interest" description="M-domain">
    <location>
        <begin position="298"/>
        <end position="497"/>
    </location>
</feature>
<feature type="binding site" evidence="1">
    <location>
        <begin position="108"/>
        <end position="117"/>
    </location>
    <ligand>
        <name>GTP</name>
        <dbReference type="ChEBI" id="CHEBI:37565"/>
    </ligand>
</feature>
<feature type="binding site" evidence="1">
    <location>
        <begin position="192"/>
        <end position="196"/>
    </location>
    <ligand>
        <name>GTP</name>
        <dbReference type="ChEBI" id="CHEBI:37565"/>
    </ligand>
</feature>
<feature type="binding site" evidence="1">
    <location>
        <begin position="250"/>
        <end position="253"/>
    </location>
    <ligand>
        <name>GTP</name>
        <dbReference type="ChEBI" id="CHEBI:37565"/>
    </ligand>
</feature>
<gene>
    <name type="primary">SRP-54B</name>
    <name type="ordered locus">At5g49500</name>
    <name type="ORF">K6M13.4</name>
</gene>
<protein>
    <recommendedName>
        <fullName>Signal recognition particle subunit SRP54 2</fullName>
        <ecNumber evidence="3">3.6.5.4</ecNumber>
    </recommendedName>
    <alternativeName>
        <fullName>Signal recognition particle 54 kDa protein 2</fullName>
        <shortName>SRP54</shortName>
    </alternativeName>
</protein>
<reference key="1">
    <citation type="journal article" date="1994" name="Plant Physiol.">
        <title>Arabidopsis thaliana expresses three divergent Srp54 genes.</title>
        <authorList>
            <person name="Chu B."/>
            <person name="Lindstrom J.T."/>
            <person name="Belanger F.C."/>
        </authorList>
    </citation>
    <scope>NUCLEOTIDE SEQUENCE [GENOMIC DNA]</scope>
</reference>
<reference key="2">
    <citation type="journal article" date="2000" name="DNA Res.">
        <title>Structural analysis of Arabidopsis thaliana chromosome 5. X. Sequence features of the regions of 3,076,755 bp covered by sixty P1 and TAC clones.</title>
        <authorList>
            <person name="Sato S."/>
            <person name="Nakamura Y."/>
            <person name="Kaneko T."/>
            <person name="Katoh T."/>
            <person name="Asamizu E."/>
            <person name="Kotani H."/>
            <person name="Tabata S."/>
        </authorList>
    </citation>
    <scope>NUCLEOTIDE SEQUENCE [LARGE SCALE GENOMIC DNA]</scope>
    <source>
        <strain>cv. Columbia</strain>
    </source>
</reference>
<reference key="3">
    <citation type="journal article" date="2017" name="Plant J.">
        <title>Araport11: a complete reannotation of the Arabidopsis thaliana reference genome.</title>
        <authorList>
            <person name="Cheng C.Y."/>
            <person name="Krishnakumar V."/>
            <person name="Chan A.P."/>
            <person name="Thibaud-Nissen F."/>
            <person name="Schobel S."/>
            <person name="Town C.D."/>
        </authorList>
    </citation>
    <scope>GENOME REANNOTATION</scope>
    <source>
        <strain>cv. Columbia</strain>
    </source>
</reference>
<evidence type="ECO:0000250" key="1"/>
<evidence type="ECO:0000250" key="2">
    <source>
        <dbReference type="UniProtKB" id="P61010"/>
    </source>
</evidence>
<evidence type="ECO:0000250" key="3">
    <source>
        <dbReference type="UniProtKB" id="P61011"/>
    </source>
</evidence>
<evidence type="ECO:0000305" key="4"/>
<dbReference type="EC" id="3.6.5.4" evidence="3"/>
<dbReference type="EMBL" id="U12126">
    <property type="protein sequence ID" value="AAA66199.1"/>
    <property type="status" value="ALT_SEQ"/>
    <property type="molecule type" value="Genomic_DNA"/>
</dbReference>
<dbReference type="EMBL" id="AB023033">
    <property type="protein sequence ID" value="BAB10763.1"/>
    <property type="molecule type" value="Genomic_DNA"/>
</dbReference>
<dbReference type="EMBL" id="CP002688">
    <property type="protein sequence ID" value="AED95821.1"/>
    <property type="molecule type" value="Genomic_DNA"/>
</dbReference>
<dbReference type="RefSeq" id="NP_199761.1">
    <property type="nucleotide sequence ID" value="NM_124327.2"/>
</dbReference>
<dbReference type="SMR" id="P49966"/>
<dbReference type="BioGRID" id="20256">
    <property type="interactions" value="2"/>
</dbReference>
<dbReference type="FunCoup" id="P49966">
    <property type="interactions" value="3667"/>
</dbReference>
<dbReference type="IntAct" id="P49966">
    <property type="interactions" value="1"/>
</dbReference>
<dbReference type="STRING" id="3702.P49966"/>
<dbReference type="PaxDb" id="3702-AT5G49500.1"/>
<dbReference type="ProteomicsDB" id="226719"/>
<dbReference type="EnsemblPlants" id="AT5G49500.1">
    <property type="protein sequence ID" value="AT5G49500.1"/>
    <property type="gene ID" value="AT5G49500"/>
</dbReference>
<dbReference type="GeneID" id="835010"/>
<dbReference type="Gramene" id="AT5G49500.1">
    <property type="protein sequence ID" value="AT5G49500.1"/>
    <property type="gene ID" value="AT5G49500"/>
</dbReference>
<dbReference type="KEGG" id="ath:AT5G49500"/>
<dbReference type="Araport" id="AT5G49500"/>
<dbReference type="TAIR" id="AT5G49500"/>
<dbReference type="eggNOG" id="KOG0780">
    <property type="taxonomic scope" value="Eukaryota"/>
</dbReference>
<dbReference type="HOGENOM" id="CLU_009301_6_1_1"/>
<dbReference type="InParanoid" id="P49966"/>
<dbReference type="OMA" id="YKRMAKT"/>
<dbReference type="PRO" id="PR:P49966"/>
<dbReference type="Proteomes" id="UP000006548">
    <property type="component" value="Chromosome 5"/>
</dbReference>
<dbReference type="ExpressionAtlas" id="P49966">
    <property type="expression patterns" value="baseline and differential"/>
</dbReference>
<dbReference type="GO" id="GO:0005783">
    <property type="term" value="C:endoplasmic reticulum"/>
    <property type="evidence" value="ECO:0007669"/>
    <property type="project" value="UniProtKB-SubCell"/>
</dbReference>
<dbReference type="GO" id="GO:0005786">
    <property type="term" value="C:signal recognition particle, endoplasmic reticulum targeting"/>
    <property type="evidence" value="ECO:0007669"/>
    <property type="project" value="UniProtKB-KW"/>
</dbReference>
<dbReference type="GO" id="GO:0008312">
    <property type="term" value="F:7S RNA binding"/>
    <property type="evidence" value="ECO:0007669"/>
    <property type="project" value="InterPro"/>
</dbReference>
<dbReference type="GO" id="GO:0005525">
    <property type="term" value="F:GTP binding"/>
    <property type="evidence" value="ECO:0007669"/>
    <property type="project" value="UniProtKB-KW"/>
</dbReference>
<dbReference type="GO" id="GO:0003924">
    <property type="term" value="F:GTPase activity"/>
    <property type="evidence" value="ECO:0007669"/>
    <property type="project" value="InterPro"/>
</dbReference>
<dbReference type="GO" id="GO:0006614">
    <property type="term" value="P:SRP-dependent cotranslational protein targeting to membrane"/>
    <property type="evidence" value="ECO:0007669"/>
    <property type="project" value="InterPro"/>
</dbReference>
<dbReference type="CDD" id="cd17875">
    <property type="entry name" value="SRP54_G"/>
    <property type="match status" value="1"/>
</dbReference>
<dbReference type="FunFam" id="1.10.260.30:FF:000004">
    <property type="entry name" value="Signal recognition particle 54 kDa protein"/>
    <property type="match status" value="1"/>
</dbReference>
<dbReference type="FunFam" id="3.40.50.300:FF:000022">
    <property type="entry name" value="Signal recognition particle 54 kDa subunit"/>
    <property type="match status" value="1"/>
</dbReference>
<dbReference type="FunFam" id="1.20.120.140:FF:000001">
    <property type="entry name" value="Signal recognition particle GTPase"/>
    <property type="match status" value="1"/>
</dbReference>
<dbReference type="Gene3D" id="3.40.50.300">
    <property type="entry name" value="P-loop containing nucleotide triphosphate hydrolases"/>
    <property type="match status" value="1"/>
</dbReference>
<dbReference type="Gene3D" id="1.20.120.140">
    <property type="entry name" value="Signal recognition particle SRP54, nucleotide-binding domain"/>
    <property type="match status" value="1"/>
</dbReference>
<dbReference type="Gene3D" id="1.10.260.30">
    <property type="entry name" value="Signal recognition particle, SRP54 subunit, M-domain"/>
    <property type="match status" value="1"/>
</dbReference>
<dbReference type="HAMAP" id="MF_00306">
    <property type="entry name" value="SRP54"/>
    <property type="match status" value="1"/>
</dbReference>
<dbReference type="InterPro" id="IPR027417">
    <property type="entry name" value="P-loop_NTPase"/>
</dbReference>
<dbReference type="InterPro" id="IPR036891">
    <property type="entry name" value="Signal_recog_part_SRP54_M_sf"/>
</dbReference>
<dbReference type="InterPro" id="IPR013822">
    <property type="entry name" value="Signal_recog_particl_SRP54_hlx"/>
</dbReference>
<dbReference type="InterPro" id="IPR004125">
    <property type="entry name" value="Signal_recog_particle_SRP54_M"/>
</dbReference>
<dbReference type="InterPro" id="IPR036225">
    <property type="entry name" value="SRP/SRP_N"/>
</dbReference>
<dbReference type="InterPro" id="IPR022941">
    <property type="entry name" value="SRP54"/>
</dbReference>
<dbReference type="InterPro" id="IPR006325">
    <property type="entry name" value="SRP54_euk"/>
</dbReference>
<dbReference type="InterPro" id="IPR000897">
    <property type="entry name" value="SRP54_GTPase_dom"/>
</dbReference>
<dbReference type="InterPro" id="IPR042101">
    <property type="entry name" value="SRP54_N_sf"/>
</dbReference>
<dbReference type="NCBIfam" id="TIGR01425">
    <property type="entry name" value="SRP54_euk"/>
    <property type="match status" value="1"/>
</dbReference>
<dbReference type="PANTHER" id="PTHR11564">
    <property type="entry name" value="SIGNAL RECOGNITION PARTICLE 54K PROTEIN SRP54"/>
    <property type="match status" value="1"/>
</dbReference>
<dbReference type="PANTHER" id="PTHR11564:SF5">
    <property type="entry name" value="SIGNAL RECOGNITION PARTICLE SUBUNIT SRP54"/>
    <property type="match status" value="1"/>
</dbReference>
<dbReference type="Pfam" id="PF00448">
    <property type="entry name" value="SRP54"/>
    <property type="match status" value="1"/>
</dbReference>
<dbReference type="Pfam" id="PF02881">
    <property type="entry name" value="SRP54_N"/>
    <property type="match status" value="1"/>
</dbReference>
<dbReference type="Pfam" id="PF02978">
    <property type="entry name" value="SRP_SPB"/>
    <property type="match status" value="1"/>
</dbReference>
<dbReference type="SMART" id="SM00962">
    <property type="entry name" value="SRP54"/>
    <property type="match status" value="1"/>
</dbReference>
<dbReference type="SMART" id="SM00963">
    <property type="entry name" value="SRP54_N"/>
    <property type="match status" value="1"/>
</dbReference>
<dbReference type="SUPFAM" id="SSF47364">
    <property type="entry name" value="Domain of the SRP/SRP receptor G-proteins"/>
    <property type="match status" value="1"/>
</dbReference>
<dbReference type="SUPFAM" id="SSF52540">
    <property type="entry name" value="P-loop containing nucleoside triphosphate hydrolases"/>
    <property type="match status" value="1"/>
</dbReference>
<dbReference type="SUPFAM" id="SSF47446">
    <property type="entry name" value="Signal peptide-binding domain"/>
    <property type="match status" value="1"/>
</dbReference>
<dbReference type="PROSITE" id="PS00300">
    <property type="entry name" value="SRP54"/>
    <property type="match status" value="1"/>
</dbReference>
<sequence>MVLAELGGRIMSAIQKMNNVTIIDEKALNDCLNEITRALLQSDVSFPLVKEMQTNIKKIVNLEDLAAGHNKRRIIEQAIFSELCKMLDPGKSAFAPKKAKPSVVMFVGLQGEVLEKPQLVPSMLIIIRRKGYKPALVCADTFRAGAFDQLKQNATKSKIPYYGSYTGSDPVKIAVEGVDRFKKENCDLIIVDTSGRHKQQASLFEEMRQISEATKPDLVIFVMDSSIGQTAFEQARAFKQTVAVGAVIITKMDGHAKGGGTLSAVAATKSPVIFIGTGEHMDEFEVFDAKPFVSRLLGNGDMSGFVNKLQEVVPKDQQPELLEMLSHGKFTLRIMYDQFQNMLNMGPLKEVFSMLPGMRAEMMPEGHEKESQAKIKRYMTMMDSMTNEELDSSNPKVFNESRIMRIARGSGRIVREVMEMLEEYKRLTTMWGKVKGLKNLEKGNMSALSKNKNSQQLSKVLPAQMLKQIGGMSGLQSLMKQMGSGKDLMGMFGGRDE</sequence>
<proteinExistence type="inferred from homology"/>
<organism>
    <name type="scientific">Arabidopsis thaliana</name>
    <name type="common">Mouse-ear cress</name>
    <dbReference type="NCBI Taxonomy" id="3702"/>
    <lineage>
        <taxon>Eukaryota</taxon>
        <taxon>Viridiplantae</taxon>
        <taxon>Streptophyta</taxon>
        <taxon>Embryophyta</taxon>
        <taxon>Tracheophyta</taxon>
        <taxon>Spermatophyta</taxon>
        <taxon>Magnoliopsida</taxon>
        <taxon>eudicotyledons</taxon>
        <taxon>Gunneridae</taxon>
        <taxon>Pentapetalae</taxon>
        <taxon>rosids</taxon>
        <taxon>malvids</taxon>
        <taxon>Brassicales</taxon>
        <taxon>Brassicaceae</taxon>
        <taxon>Camelineae</taxon>
        <taxon>Arabidopsis</taxon>
    </lineage>
</organism>
<accession>P49966</accession>